<accession>Q92R46</accession>
<reference key="1">
    <citation type="journal article" date="2001" name="Proc. Natl. Acad. Sci. U.S.A.">
        <title>Analysis of the chromosome sequence of the legume symbiont Sinorhizobium meliloti strain 1021.</title>
        <authorList>
            <person name="Capela D."/>
            <person name="Barloy-Hubler F."/>
            <person name="Gouzy J."/>
            <person name="Bothe G."/>
            <person name="Ampe F."/>
            <person name="Batut J."/>
            <person name="Boistard P."/>
            <person name="Becker A."/>
            <person name="Boutry M."/>
            <person name="Cadieu E."/>
            <person name="Dreano S."/>
            <person name="Gloux S."/>
            <person name="Godrie T."/>
            <person name="Goffeau A."/>
            <person name="Kahn D."/>
            <person name="Kiss E."/>
            <person name="Lelaure V."/>
            <person name="Masuy D."/>
            <person name="Pohl T."/>
            <person name="Portetelle D."/>
            <person name="Puehler A."/>
            <person name="Purnelle B."/>
            <person name="Ramsperger U."/>
            <person name="Renard C."/>
            <person name="Thebault P."/>
            <person name="Vandenbol M."/>
            <person name="Weidner S."/>
            <person name="Galibert F."/>
        </authorList>
    </citation>
    <scope>NUCLEOTIDE SEQUENCE [LARGE SCALE GENOMIC DNA]</scope>
    <source>
        <strain>1021</strain>
    </source>
</reference>
<reference key="2">
    <citation type="journal article" date="2001" name="Science">
        <title>The composite genome of the legume symbiont Sinorhizobium meliloti.</title>
        <authorList>
            <person name="Galibert F."/>
            <person name="Finan T.M."/>
            <person name="Long S.R."/>
            <person name="Puehler A."/>
            <person name="Abola P."/>
            <person name="Ampe F."/>
            <person name="Barloy-Hubler F."/>
            <person name="Barnett M.J."/>
            <person name="Becker A."/>
            <person name="Boistard P."/>
            <person name="Bothe G."/>
            <person name="Boutry M."/>
            <person name="Bowser L."/>
            <person name="Buhrmester J."/>
            <person name="Cadieu E."/>
            <person name="Capela D."/>
            <person name="Chain P."/>
            <person name="Cowie A."/>
            <person name="Davis R.W."/>
            <person name="Dreano S."/>
            <person name="Federspiel N.A."/>
            <person name="Fisher R.F."/>
            <person name="Gloux S."/>
            <person name="Godrie T."/>
            <person name="Goffeau A."/>
            <person name="Golding B."/>
            <person name="Gouzy J."/>
            <person name="Gurjal M."/>
            <person name="Hernandez-Lucas I."/>
            <person name="Hong A."/>
            <person name="Huizar L."/>
            <person name="Hyman R.W."/>
            <person name="Jones T."/>
            <person name="Kahn D."/>
            <person name="Kahn M.L."/>
            <person name="Kalman S."/>
            <person name="Keating D.H."/>
            <person name="Kiss E."/>
            <person name="Komp C."/>
            <person name="Lelaure V."/>
            <person name="Masuy D."/>
            <person name="Palm C."/>
            <person name="Peck M.C."/>
            <person name="Pohl T.M."/>
            <person name="Portetelle D."/>
            <person name="Purnelle B."/>
            <person name="Ramsperger U."/>
            <person name="Surzycki R."/>
            <person name="Thebault P."/>
            <person name="Vandenbol M."/>
            <person name="Vorhoelter F.J."/>
            <person name="Weidner S."/>
            <person name="Wells D.H."/>
            <person name="Wong K."/>
            <person name="Yeh K.-C."/>
            <person name="Batut J."/>
        </authorList>
    </citation>
    <scope>NUCLEOTIDE SEQUENCE [LARGE SCALE GENOMIC DNA]</scope>
    <source>
        <strain>1021</strain>
    </source>
</reference>
<gene>
    <name evidence="1" type="primary">era</name>
    <name type="ordered locus">R01073</name>
    <name type="ORF">SMc02651</name>
</gene>
<comment type="function">
    <text evidence="1">An essential GTPase that binds both GDP and GTP, with rapid nucleotide exchange. Plays a role in 16S rRNA processing and 30S ribosomal subunit biogenesis and possibly also in cell cycle regulation and energy metabolism.</text>
</comment>
<comment type="subunit">
    <text evidence="1">Monomer.</text>
</comment>
<comment type="subcellular location">
    <subcellularLocation>
        <location>Cytoplasm</location>
    </subcellularLocation>
    <subcellularLocation>
        <location evidence="1">Cell inner membrane</location>
        <topology evidence="1">Peripheral membrane protein</topology>
    </subcellularLocation>
</comment>
<comment type="similarity">
    <text evidence="1 2">Belongs to the TRAFAC class TrmE-Era-EngA-EngB-Septin-like GTPase superfamily. Era GTPase family.</text>
</comment>
<organism>
    <name type="scientific">Rhizobium meliloti (strain 1021)</name>
    <name type="common">Ensifer meliloti</name>
    <name type="synonym">Sinorhizobium meliloti</name>
    <dbReference type="NCBI Taxonomy" id="266834"/>
    <lineage>
        <taxon>Bacteria</taxon>
        <taxon>Pseudomonadati</taxon>
        <taxon>Pseudomonadota</taxon>
        <taxon>Alphaproteobacteria</taxon>
        <taxon>Hyphomicrobiales</taxon>
        <taxon>Rhizobiaceae</taxon>
        <taxon>Sinorhizobium/Ensifer group</taxon>
        <taxon>Sinorhizobium</taxon>
    </lineage>
</organism>
<name>ERA_RHIME</name>
<dbReference type="EMBL" id="AL591688">
    <property type="protein sequence ID" value="CAC45652.1"/>
    <property type="molecule type" value="Genomic_DNA"/>
</dbReference>
<dbReference type="RefSeq" id="NP_385179.1">
    <property type="nucleotide sequence ID" value="NC_003047.1"/>
</dbReference>
<dbReference type="SMR" id="Q92R46"/>
<dbReference type="EnsemblBacteria" id="CAC45652">
    <property type="protein sequence ID" value="CAC45652"/>
    <property type="gene ID" value="SMc02651"/>
</dbReference>
<dbReference type="KEGG" id="sme:SMc02651"/>
<dbReference type="PATRIC" id="fig|266834.11.peg.2479"/>
<dbReference type="eggNOG" id="COG1159">
    <property type="taxonomic scope" value="Bacteria"/>
</dbReference>
<dbReference type="HOGENOM" id="CLU_038009_1_1_5"/>
<dbReference type="OrthoDB" id="9805918at2"/>
<dbReference type="Proteomes" id="UP000001976">
    <property type="component" value="Chromosome"/>
</dbReference>
<dbReference type="GO" id="GO:0005829">
    <property type="term" value="C:cytosol"/>
    <property type="evidence" value="ECO:0007669"/>
    <property type="project" value="TreeGrafter"/>
</dbReference>
<dbReference type="GO" id="GO:0005886">
    <property type="term" value="C:plasma membrane"/>
    <property type="evidence" value="ECO:0007669"/>
    <property type="project" value="UniProtKB-SubCell"/>
</dbReference>
<dbReference type="GO" id="GO:0005525">
    <property type="term" value="F:GTP binding"/>
    <property type="evidence" value="ECO:0007669"/>
    <property type="project" value="UniProtKB-UniRule"/>
</dbReference>
<dbReference type="GO" id="GO:0003924">
    <property type="term" value="F:GTPase activity"/>
    <property type="evidence" value="ECO:0007669"/>
    <property type="project" value="UniProtKB-UniRule"/>
</dbReference>
<dbReference type="GO" id="GO:0043024">
    <property type="term" value="F:ribosomal small subunit binding"/>
    <property type="evidence" value="ECO:0007669"/>
    <property type="project" value="TreeGrafter"/>
</dbReference>
<dbReference type="GO" id="GO:0070181">
    <property type="term" value="F:small ribosomal subunit rRNA binding"/>
    <property type="evidence" value="ECO:0007669"/>
    <property type="project" value="UniProtKB-UniRule"/>
</dbReference>
<dbReference type="GO" id="GO:0000028">
    <property type="term" value="P:ribosomal small subunit assembly"/>
    <property type="evidence" value="ECO:0007669"/>
    <property type="project" value="TreeGrafter"/>
</dbReference>
<dbReference type="CDD" id="cd04163">
    <property type="entry name" value="Era"/>
    <property type="match status" value="1"/>
</dbReference>
<dbReference type="CDD" id="cd22534">
    <property type="entry name" value="KH-II_Era"/>
    <property type="match status" value="1"/>
</dbReference>
<dbReference type="FunFam" id="3.40.50.300:FF:001190">
    <property type="entry name" value="GTP-binding protein ERG"/>
    <property type="match status" value="1"/>
</dbReference>
<dbReference type="FunFam" id="3.30.300.20:FF:000031">
    <property type="entry name" value="GTPase Era"/>
    <property type="match status" value="1"/>
</dbReference>
<dbReference type="Gene3D" id="3.30.300.20">
    <property type="match status" value="1"/>
</dbReference>
<dbReference type="Gene3D" id="3.40.50.300">
    <property type="entry name" value="P-loop containing nucleotide triphosphate hydrolases"/>
    <property type="match status" value="1"/>
</dbReference>
<dbReference type="HAMAP" id="MF_00367">
    <property type="entry name" value="GTPase_Era"/>
    <property type="match status" value="1"/>
</dbReference>
<dbReference type="InterPro" id="IPR030388">
    <property type="entry name" value="G_ERA_dom"/>
</dbReference>
<dbReference type="InterPro" id="IPR006073">
    <property type="entry name" value="GTP-bd"/>
</dbReference>
<dbReference type="InterPro" id="IPR005662">
    <property type="entry name" value="GTPase_Era-like"/>
</dbReference>
<dbReference type="InterPro" id="IPR015946">
    <property type="entry name" value="KH_dom-like_a/b"/>
</dbReference>
<dbReference type="InterPro" id="IPR004044">
    <property type="entry name" value="KH_dom_type_2"/>
</dbReference>
<dbReference type="InterPro" id="IPR009019">
    <property type="entry name" value="KH_sf_prok-type"/>
</dbReference>
<dbReference type="InterPro" id="IPR027417">
    <property type="entry name" value="P-loop_NTPase"/>
</dbReference>
<dbReference type="InterPro" id="IPR005225">
    <property type="entry name" value="Small_GTP-bd"/>
</dbReference>
<dbReference type="NCBIfam" id="TIGR00436">
    <property type="entry name" value="era"/>
    <property type="match status" value="1"/>
</dbReference>
<dbReference type="NCBIfam" id="NF000908">
    <property type="entry name" value="PRK00089.1"/>
    <property type="match status" value="1"/>
</dbReference>
<dbReference type="NCBIfam" id="TIGR00231">
    <property type="entry name" value="small_GTP"/>
    <property type="match status" value="1"/>
</dbReference>
<dbReference type="PANTHER" id="PTHR42698">
    <property type="entry name" value="GTPASE ERA"/>
    <property type="match status" value="1"/>
</dbReference>
<dbReference type="PANTHER" id="PTHR42698:SF1">
    <property type="entry name" value="GTPASE ERA, MITOCHONDRIAL"/>
    <property type="match status" value="1"/>
</dbReference>
<dbReference type="Pfam" id="PF07650">
    <property type="entry name" value="KH_2"/>
    <property type="match status" value="1"/>
</dbReference>
<dbReference type="Pfam" id="PF01926">
    <property type="entry name" value="MMR_HSR1"/>
    <property type="match status" value="1"/>
</dbReference>
<dbReference type="SUPFAM" id="SSF52540">
    <property type="entry name" value="P-loop containing nucleoside triphosphate hydrolases"/>
    <property type="match status" value="1"/>
</dbReference>
<dbReference type="SUPFAM" id="SSF54814">
    <property type="entry name" value="Prokaryotic type KH domain (KH-domain type II)"/>
    <property type="match status" value="1"/>
</dbReference>
<dbReference type="PROSITE" id="PS51713">
    <property type="entry name" value="G_ERA"/>
    <property type="match status" value="1"/>
</dbReference>
<dbReference type="PROSITE" id="PS50823">
    <property type="entry name" value="KH_TYPE_2"/>
    <property type="match status" value="1"/>
</dbReference>
<proteinExistence type="inferred from homology"/>
<sequence length="313" mass="34852">MTDIMTDTQKDTAAGAVPTRSGFVALIGATNAGKSTLVNRLVGAKVSIVSHKVQTTRAIIRGIAIHGSAQIVFMDTPGIFKPRRRLDRAMVTTAWGGAKDADLIMLLIDSERGIKGDAEAILEGLKEVHQPKVLVLNKVDQVRREDLLKLAAAANDVVAFERTFMISALTGSGCEDVMDYLAETLPEGPWYYPEDQISDLPMRQLAAEITREKLFLRLHQELPYASHVETEKWEERKDGSVRIEQVIYVERDSQKKIALGKGGEAIKAISTAARKEISEILEQPVHLFLFVKVRENWGDDPERFREMGLDFPK</sequence>
<feature type="chain" id="PRO_0000180041" description="GTPase Era">
    <location>
        <begin position="1"/>
        <end position="313"/>
    </location>
</feature>
<feature type="domain" description="Era-type G" evidence="2">
    <location>
        <begin position="20"/>
        <end position="187"/>
    </location>
</feature>
<feature type="domain" description="KH type-2" evidence="1">
    <location>
        <begin position="218"/>
        <end position="295"/>
    </location>
</feature>
<feature type="region of interest" description="G1" evidence="2">
    <location>
        <begin position="28"/>
        <end position="35"/>
    </location>
</feature>
<feature type="region of interest" description="G2" evidence="2">
    <location>
        <begin position="54"/>
        <end position="58"/>
    </location>
</feature>
<feature type="region of interest" description="G3" evidence="2">
    <location>
        <begin position="75"/>
        <end position="78"/>
    </location>
</feature>
<feature type="region of interest" description="G4" evidence="2">
    <location>
        <begin position="137"/>
        <end position="140"/>
    </location>
</feature>
<feature type="region of interest" description="G5" evidence="2">
    <location>
        <begin position="166"/>
        <end position="168"/>
    </location>
</feature>
<feature type="binding site" evidence="1">
    <location>
        <begin position="28"/>
        <end position="35"/>
    </location>
    <ligand>
        <name>GTP</name>
        <dbReference type="ChEBI" id="CHEBI:37565"/>
    </ligand>
</feature>
<feature type="binding site" evidence="1">
    <location>
        <begin position="75"/>
        <end position="79"/>
    </location>
    <ligand>
        <name>GTP</name>
        <dbReference type="ChEBI" id="CHEBI:37565"/>
    </ligand>
</feature>
<feature type="binding site" evidence="1">
    <location>
        <begin position="137"/>
        <end position="140"/>
    </location>
    <ligand>
        <name>GTP</name>
        <dbReference type="ChEBI" id="CHEBI:37565"/>
    </ligand>
</feature>
<protein>
    <recommendedName>
        <fullName evidence="1">GTPase Era</fullName>
    </recommendedName>
</protein>
<keyword id="KW-0997">Cell inner membrane</keyword>
<keyword id="KW-1003">Cell membrane</keyword>
<keyword id="KW-0963">Cytoplasm</keyword>
<keyword id="KW-0342">GTP-binding</keyword>
<keyword id="KW-0472">Membrane</keyword>
<keyword id="KW-0547">Nucleotide-binding</keyword>
<keyword id="KW-1185">Reference proteome</keyword>
<keyword id="KW-0690">Ribosome biogenesis</keyword>
<keyword id="KW-0694">RNA-binding</keyword>
<keyword id="KW-0699">rRNA-binding</keyword>
<evidence type="ECO:0000255" key="1">
    <source>
        <dbReference type="HAMAP-Rule" id="MF_00367"/>
    </source>
</evidence>
<evidence type="ECO:0000255" key="2">
    <source>
        <dbReference type="PROSITE-ProRule" id="PRU01050"/>
    </source>
</evidence>